<name>DAPF_RHILW</name>
<feature type="chain" id="PRO_1000099259" description="Diaminopimelate epimerase">
    <location>
        <begin position="1"/>
        <end position="301"/>
    </location>
</feature>
<feature type="region of interest" description="Disordered" evidence="2">
    <location>
        <begin position="280"/>
        <end position="301"/>
    </location>
</feature>
<feature type="active site" description="Proton donor" evidence="1">
    <location>
        <position position="76"/>
    </location>
</feature>
<feature type="active site" description="Proton acceptor" evidence="1">
    <location>
        <position position="224"/>
    </location>
</feature>
<feature type="binding site" evidence="1">
    <location>
        <position position="15"/>
    </location>
    <ligand>
        <name>substrate</name>
    </ligand>
</feature>
<feature type="binding site" evidence="1">
    <location>
        <position position="47"/>
    </location>
    <ligand>
        <name>substrate</name>
    </ligand>
</feature>
<feature type="binding site" evidence="1">
    <location>
        <position position="67"/>
    </location>
    <ligand>
        <name>substrate</name>
    </ligand>
</feature>
<feature type="binding site" evidence="1">
    <location>
        <begin position="77"/>
        <end position="78"/>
    </location>
    <ligand>
        <name>substrate</name>
    </ligand>
</feature>
<feature type="binding site" evidence="1">
    <location>
        <position position="163"/>
    </location>
    <ligand>
        <name>substrate</name>
    </ligand>
</feature>
<feature type="binding site" evidence="1">
    <location>
        <position position="197"/>
    </location>
    <ligand>
        <name>substrate</name>
    </ligand>
</feature>
<feature type="binding site" evidence="1">
    <location>
        <begin position="215"/>
        <end position="216"/>
    </location>
    <ligand>
        <name>substrate</name>
    </ligand>
</feature>
<feature type="binding site" evidence="1">
    <location>
        <begin position="225"/>
        <end position="226"/>
    </location>
    <ligand>
        <name>substrate</name>
    </ligand>
</feature>
<feature type="site" description="Could be important to modulate the pK values of the two catalytic cysteine residues" evidence="1">
    <location>
        <position position="165"/>
    </location>
</feature>
<feature type="site" description="Could be important to modulate the pK values of the two catalytic cysteine residues" evidence="1">
    <location>
        <position position="215"/>
    </location>
</feature>
<keyword id="KW-0028">Amino-acid biosynthesis</keyword>
<keyword id="KW-0963">Cytoplasm</keyword>
<keyword id="KW-0413">Isomerase</keyword>
<keyword id="KW-0457">Lysine biosynthesis</keyword>
<keyword id="KW-1185">Reference proteome</keyword>
<proteinExistence type="inferred from homology"/>
<evidence type="ECO:0000255" key="1">
    <source>
        <dbReference type="HAMAP-Rule" id="MF_00197"/>
    </source>
</evidence>
<evidence type="ECO:0000256" key="2">
    <source>
        <dbReference type="SAM" id="MobiDB-lite"/>
    </source>
</evidence>
<gene>
    <name evidence="1" type="primary">dapF</name>
    <name type="ordered locus">Rleg2_3748</name>
</gene>
<comment type="function">
    <text evidence="1">Catalyzes the stereoinversion of LL-2,6-diaminopimelate (L,L-DAP) to meso-diaminopimelate (meso-DAP), a precursor of L-lysine and an essential component of the bacterial peptidoglycan.</text>
</comment>
<comment type="catalytic activity">
    <reaction evidence="1">
        <text>(2S,6S)-2,6-diaminopimelate = meso-2,6-diaminopimelate</text>
        <dbReference type="Rhea" id="RHEA:15393"/>
        <dbReference type="ChEBI" id="CHEBI:57609"/>
        <dbReference type="ChEBI" id="CHEBI:57791"/>
        <dbReference type="EC" id="5.1.1.7"/>
    </reaction>
</comment>
<comment type="pathway">
    <text evidence="1">Amino-acid biosynthesis; L-lysine biosynthesis via DAP pathway; DL-2,6-diaminopimelate from LL-2,6-diaminopimelate: step 1/1.</text>
</comment>
<comment type="subunit">
    <text evidence="1">Homodimer.</text>
</comment>
<comment type="subcellular location">
    <subcellularLocation>
        <location evidence="1">Cytoplasm</location>
    </subcellularLocation>
</comment>
<comment type="similarity">
    <text evidence="1">Belongs to the diaminopimelate epimerase family.</text>
</comment>
<organism>
    <name type="scientific">Rhizobium leguminosarum bv. trifolii (strain WSM2304)</name>
    <dbReference type="NCBI Taxonomy" id="395492"/>
    <lineage>
        <taxon>Bacteria</taxon>
        <taxon>Pseudomonadati</taxon>
        <taxon>Pseudomonadota</taxon>
        <taxon>Alphaproteobacteria</taxon>
        <taxon>Hyphomicrobiales</taxon>
        <taxon>Rhizobiaceae</taxon>
        <taxon>Rhizobium/Agrobacterium group</taxon>
        <taxon>Rhizobium</taxon>
    </lineage>
</organism>
<reference key="1">
    <citation type="journal article" date="2010" name="Stand. Genomic Sci.">
        <title>Complete genome sequence of Rhizobium leguminosarum bv trifolii strain WSM2304, an effective microsymbiont of the South American clover Trifolium polymorphum.</title>
        <authorList>
            <person name="Reeve W."/>
            <person name="O'Hara G."/>
            <person name="Chain P."/>
            <person name="Ardley J."/>
            <person name="Brau L."/>
            <person name="Nandesena K."/>
            <person name="Tiwari R."/>
            <person name="Malfatti S."/>
            <person name="Kiss H."/>
            <person name="Lapidus A."/>
            <person name="Copeland A."/>
            <person name="Nolan M."/>
            <person name="Land M."/>
            <person name="Ivanova N."/>
            <person name="Mavromatis K."/>
            <person name="Markowitz V."/>
            <person name="Kyrpides N."/>
            <person name="Melino V."/>
            <person name="Denton M."/>
            <person name="Yates R."/>
            <person name="Howieson J."/>
        </authorList>
    </citation>
    <scope>NUCLEOTIDE SEQUENCE [LARGE SCALE GENOMIC DNA]</scope>
    <source>
        <strain>WSM2304</strain>
    </source>
</reference>
<accession>B5ZTH4</accession>
<sequence length="301" mass="32387">MSATVEFARMNGLGNKILVVDMRGRPDKVTPAAAVALNADPQTEFDQIMAIHDPKADGTDAFIDILNSDGSKAQACGNGTRCVVQALAAETGRKAFTFQTVAGILNAVEHEDGTISVDMGRPVFDWNRIPLAEEFHDTSRIELQIGPIDNPVLHSPSAMSMGNPHAIFWVDRDVMSYDLARFGPLLENHPMFPERANITLAQVTSPTSMTTRTWERGAGLTLACGSAACSAAVSAARTGRTGRKVTINVASAKPPATLSIEWRERDDHVIMTGPAEWEWSGSLDPSTGLWSRDGTQEAGAR</sequence>
<dbReference type="EC" id="5.1.1.7" evidence="1"/>
<dbReference type="EMBL" id="CP001191">
    <property type="protein sequence ID" value="ACI57010.1"/>
    <property type="molecule type" value="Genomic_DNA"/>
</dbReference>
<dbReference type="RefSeq" id="WP_012559263.1">
    <property type="nucleotide sequence ID" value="NC_011369.1"/>
</dbReference>
<dbReference type="SMR" id="B5ZTH4"/>
<dbReference type="STRING" id="395492.Rleg2_3748"/>
<dbReference type="KEGG" id="rlt:Rleg2_3748"/>
<dbReference type="eggNOG" id="COG0253">
    <property type="taxonomic scope" value="Bacteria"/>
</dbReference>
<dbReference type="HOGENOM" id="CLU_053306_1_0_5"/>
<dbReference type="UniPathway" id="UPA00034">
    <property type="reaction ID" value="UER00025"/>
</dbReference>
<dbReference type="Proteomes" id="UP000008330">
    <property type="component" value="Chromosome"/>
</dbReference>
<dbReference type="GO" id="GO:0005829">
    <property type="term" value="C:cytosol"/>
    <property type="evidence" value="ECO:0007669"/>
    <property type="project" value="TreeGrafter"/>
</dbReference>
<dbReference type="GO" id="GO:0008837">
    <property type="term" value="F:diaminopimelate epimerase activity"/>
    <property type="evidence" value="ECO:0007669"/>
    <property type="project" value="UniProtKB-UniRule"/>
</dbReference>
<dbReference type="GO" id="GO:0009089">
    <property type="term" value="P:lysine biosynthetic process via diaminopimelate"/>
    <property type="evidence" value="ECO:0007669"/>
    <property type="project" value="UniProtKB-UniRule"/>
</dbReference>
<dbReference type="Gene3D" id="3.10.310.10">
    <property type="entry name" value="Diaminopimelate Epimerase, Chain A, domain 1"/>
    <property type="match status" value="2"/>
</dbReference>
<dbReference type="HAMAP" id="MF_00197">
    <property type="entry name" value="DAP_epimerase"/>
    <property type="match status" value="1"/>
</dbReference>
<dbReference type="InterPro" id="IPR018510">
    <property type="entry name" value="DAP_epimerase_AS"/>
</dbReference>
<dbReference type="InterPro" id="IPR001653">
    <property type="entry name" value="DAP_epimerase_DapF"/>
</dbReference>
<dbReference type="NCBIfam" id="TIGR00652">
    <property type="entry name" value="DapF"/>
    <property type="match status" value="1"/>
</dbReference>
<dbReference type="PANTHER" id="PTHR31689:SF0">
    <property type="entry name" value="DIAMINOPIMELATE EPIMERASE"/>
    <property type="match status" value="1"/>
</dbReference>
<dbReference type="PANTHER" id="PTHR31689">
    <property type="entry name" value="DIAMINOPIMELATE EPIMERASE, CHLOROPLASTIC"/>
    <property type="match status" value="1"/>
</dbReference>
<dbReference type="Pfam" id="PF01678">
    <property type="entry name" value="DAP_epimerase"/>
    <property type="match status" value="2"/>
</dbReference>
<dbReference type="SUPFAM" id="SSF54506">
    <property type="entry name" value="Diaminopimelate epimerase-like"/>
    <property type="match status" value="2"/>
</dbReference>
<dbReference type="PROSITE" id="PS01326">
    <property type="entry name" value="DAP_EPIMERASE"/>
    <property type="match status" value="1"/>
</dbReference>
<protein>
    <recommendedName>
        <fullName evidence="1">Diaminopimelate epimerase</fullName>
        <shortName evidence="1">DAP epimerase</shortName>
        <ecNumber evidence="1">5.1.1.7</ecNumber>
    </recommendedName>
    <alternativeName>
        <fullName evidence="1">PLP-independent amino acid racemase</fullName>
    </alternativeName>
</protein>